<reference evidence="17" key="1">
    <citation type="journal article" date="2001" name="DNA Res.">
        <title>Prediction of the coding sequences of unidentified human genes. XX. The complete sequences of 100 new cDNA clones from brain which code for large proteins in vitro.</title>
        <authorList>
            <person name="Nagase T."/>
            <person name="Nakayama M."/>
            <person name="Nakajima D."/>
            <person name="Kikuno R."/>
            <person name="Ohara O."/>
        </authorList>
    </citation>
    <scope>NUCLEOTIDE SEQUENCE [LARGE SCALE MRNA] (ISOFORM 1)</scope>
    <scope>VARIANT ALA-346</scope>
    <source>
        <tissue evidence="17">Brain</tissue>
    </source>
</reference>
<reference key="2">
    <citation type="journal article" date="2002" name="DNA Res.">
        <title>Construction of expression-ready cDNA clones for KIAA genes: manual curation of 330 KIAA cDNA clones.</title>
        <authorList>
            <person name="Nakajima D."/>
            <person name="Okazaki N."/>
            <person name="Yamakawa H."/>
            <person name="Kikuno R."/>
            <person name="Ohara O."/>
            <person name="Nagase T."/>
        </authorList>
    </citation>
    <scope>SEQUENCE REVISION</scope>
</reference>
<reference key="3">
    <citation type="journal article" date="2003" name="Genome Res.">
        <title>The secreted protein discovery initiative (SPDI), a large-scale effort to identify novel human secreted and transmembrane proteins: a bioinformatics assessment.</title>
        <authorList>
            <person name="Clark H.F."/>
            <person name="Gurney A.L."/>
            <person name="Abaya E."/>
            <person name="Baker K."/>
            <person name="Baldwin D.T."/>
            <person name="Brush J."/>
            <person name="Chen J."/>
            <person name="Chow B."/>
            <person name="Chui C."/>
            <person name="Crowley C."/>
            <person name="Currell B."/>
            <person name="Deuel B."/>
            <person name="Dowd P."/>
            <person name="Eaton D."/>
            <person name="Foster J.S."/>
            <person name="Grimaldi C."/>
            <person name="Gu Q."/>
            <person name="Hass P.E."/>
            <person name="Heldens S."/>
            <person name="Huang A."/>
            <person name="Kim H.S."/>
            <person name="Klimowski L."/>
            <person name="Jin Y."/>
            <person name="Johnson S."/>
            <person name="Lee J."/>
            <person name="Lewis L."/>
            <person name="Liao D."/>
            <person name="Mark M.R."/>
            <person name="Robbie E."/>
            <person name="Sanchez C."/>
            <person name="Schoenfeld J."/>
            <person name="Seshagiri S."/>
            <person name="Simmons L."/>
            <person name="Singh J."/>
            <person name="Smith V."/>
            <person name="Stinson J."/>
            <person name="Vagts A."/>
            <person name="Vandlen R.L."/>
            <person name="Watanabe C."/>
            <person name="Wieand D."/>
            <person name="Woods K."/>
            <person name="Xie M.-H."/>
            <person name="Yansura D.G."/>
            <person name="Yi S."/>
            <person name="Yu G."/>
            <person name="Yuan J."/>
            <person name="Zhang M."/>
            <person name="Zhang Z."/>
            <person name="Goddard A.D."/>
            <person name="Wood W.I."/>
            <person name="Godowski P.J."/>
            <person name="Gray A.M."/>
        </authorList>
    </citation>
    <scope>NUCLEOTIDE SEQUENCE [LARGE SCALE MRNA] (ISOFORM 2)</scope>
    <scope>VARIANT ALA-346</scope>
</reference>
<reference key="4">
    <citation type="journal article" date="2004" name="Nature">
        <title>DNA sequence and analysis of human chromosome 9.</title>
        <authorList>
            <person name="Humphray S.J."/>
            <person name="Oliver K."/>
            <person name="Hunt A.R."/>
            <person name="Plumb R.W."/>
            <person name="Loveland J.E."/>
            <person name="Howe K.L."/>
            <person name="Andrews T.D."/>
            <person name="Searle S."/>
            <person name="Hunt S.E."/>
            <person name="Scott C.E."/>
            <person name="Jones M.C."/>
            <person name="Ainscough R."/>
            <person name="Almeida J.P."/>
            <person name="Ambrose K.D."/>
            <person name="Ashwell R.I.S."/>
            <person name="Babbage A.K."/>
            <person name="Babbage S."/>
            <person name="Bagguley C.L."/>
            <person name="Bailey J."/>
            <person name="Banerjee R."/>
            <person name="Barker D.J."/>
            <person name="Barlow K.F."/>
            <person name="Bates K."/>
            <person name="Beasley H."/>
            <person name="Beasley O."/>
            <person name="Bird C.P."/>
            <person name="Bray-Allen S."/>
            <person name="Brown A.J."/>
            <person name="Brown J.Y."/>
            <person name="Burford D."/>
            <person name="Burrill W."/>
            <person name="Burton J."/>
            <person name="Carder C."/>
            <person name="Carter N.P."/>
            <person name="Chapman J.C."/>
            <person name="Chen Y."/>
            <person name="Clarke G."/>
            <person name="Clark S.Y."/>
            <person name="Clee C.M."/>
            <person name="Clegg S."/>
            <person name="Collier R.E."/>
            <person name="Corby N."/>
            <person name="Crosier M."/>
            <person name="Cummings A.T."/>
            <person name="Davies J."/>
            <person name="Dhami P."/>
            <person name="Dunn M."/>
            <person name="Dutta I."/>
            <person name="Dyer L.W."/>
            <person name="Earthrowl M.E."/>
            <person name="Faulkner L."/>
            <person name="Fleming C.J."/>
            <person name="Frankish A."/>
            <person name="Frankland J.A."/>
            <person name="French L."/>
            <person name="Fricker D.G."/>
            <person name="Garner P."/>
            <person name="Garnett J."/>
            <person name="Ghori J."/>
            <person name="Gilbert J.G.R."/>
            <person name="Glison C."/>
            <person name="Grafham D.V."/>
            <person name="Gribble S."/>
            <person name="Griffiths C."/>
            <person name="Griffiths-Jones S."/>
            <person name="Grocock R."/>
            <person name="Guy J."/>
            <person name="Hall R.E."/>
            <person name="Hammond S."/>
            <person name="Harley J.L."/>
            <person name="Harrison E.S.I."/>
            <person name="Hart E.A."/>
            <person name="Heath P.D."/>
            <person name="Henderson C.D."/>
            <person name="Hopkins B.L."/>
            <person name="Howard P.J."/>
            <person name="Howden P.J."/>
            <person name="Huckle E."/>
            <person name="Johnson C."/>
            <person name="Johnson D."/>
            <person name="Joy A.A."/>
            <person name="Kay M."/>
            <person name="Keenan S."/>
            <person name="Kershaw J.K."/>
            <person name="Kimberley A.M."/>
            <person name="King A."/>
            <person name="Knights A."/>
            <person name="Laird G.K."/>
            <person name="Langford C."/>
            <person name="Lawlor S."/>
            <person name="Leongamornlert D.A."/>
            <person name="Leversha M."/>
            <person name="Lloyd C."/>
            <person name="Lloyd D.M."/>
            <person name="Lovell J."/>
            <person name="Martin S."/>
            <person name="Mashreghi-Mohammadi M."/>
            <person name="Matthews L."/>
            <person name="McLaren S."/>
            <person name="McLay K.E."/>
            <person name="McMurray A."/>
            <person name="Milne S."/>
            <person name="Nickerson T."/>
            <person name="Nisbett J."/>
            <person name="Nordsiek G."/>
            <person name="Pearce A.V."/>
            <person name="Peck A.I."/>
            <person name="Porter K.M."/>
            <person name="Pandian R."/>
            <person name="Pelan S."/>
            <person name="Phillimore B."/>
            <person name="Povey S."/>
            <person name="Ramsey Y."/>
            <person name="Rand V."/>
            <person name="Scharfe M."/>
            <person name="Sehra H.K."/>
            <person name="Shownkeen R."/>
            <person name="Sims S.K."/>
            <person name="Skuce C.D."/>
            <person name="Smith M."/>
            <person name="Steward C.A."/>
            <person name="Swarbreck D."/>
            <person name="Sycamore N."/>
            <person name="Tester J."/>
            <person name="Thorpe A."/>
            <person name="Tracey A."/>
            <person name="Tromans A."/>
            <person name="Thomas D.W."/>
            <person name="Wall M."/>
            <person name="Wallis J.M."/>
            <person name="West A.P."/>
            <person name="Whitehead S.L."/>
            <person name="Willey D.L."/>
            <person name="Williams S.A."/>
            <person name="Wilming L."/>
            <person name="Wray P.W."/>
            <person name="Young L."/>
            <person name="Ashurst J.L."/>
            <person name="Coulson A."/>
            <person name="Blocker H."/>
            <person name="Durbin R.M."/>
            <person name="Sulston J.E."/>
            <person name="Hubbard T."/>
            <person name="Jackson M.J."/>
            <person name="Bentley D.R."/>
            <person name="Beck S."/>
            <person name="Rogers J."/>
            <person name="Dunham I."/>
        </authorList>
    </citation>
    <scope>NUCLEOTIDE SEQUENCE [LARGE SCALE GENOMIC DNA]</scope>
</reference>
<reference evidence="15" key="5">
    <citation type="journal article" date="2004" name="Genome Res.">
        <title>The status, quality, and expansion of the NIH full-length cDNA project: the Mammalian Gene Collection (MGC).</title>
        <authorList>
            <consortium name="The MGC Project Team"/>
        </authorList>
    </citation>
    <scope>NUCLEOTIDE SEQUENCE [LARGE SCALE MRNA] (ISOFORM 1)</scope>
    <scope>VARIANT ALA-346</scope>
    <source>
        <tissue evidence="16">Adrenal gland</tissue>
    </source>
</reference>
<reference key="6">
    <citation type="journal article" date="2011" name="EMBO J.">
        <title>Structural basis for cell surface patterning through NetrinG-NGL interactions.</title>
        <authorList>
            <person name="Seiradake E."/>
            <person name="Coles C.H."/>
            <person name="Perestenko P.V."/>
            <person name="Harlos K."/>
            <person name="McIlhinney R.A."/>
            <person name="Aricescu A.R."/>
            <person name="Jones E.Y."/>
        </authorList>
    </citation>
    <scope>X-RAY CRYSTALLOGRAPHY (2.2 ANGSTROMS) OF 1-345 ALONE AND IN COMPLEX WITH LRRC4</scope>
    <scope>FUNCTION</scope>
    <scope>SUBCELLULAR LOCATION</scope>
</reference>
<reference key="7">
    <citation type="journal article" date="2011" name="J. Mol. Biol.">
        <title>Crystal structure of the ligand binding domain of netrin G2.</title>
        <authorList>
            <person name="Brasch J."/>
            <person name="Harrison O.J."/>
            <person name="Ahlsen G."/>
            <person name="Liu Q."/>
            <person name="Shapiro L."/>
        </authorList>
    </citation>
    <scope>X-RAY CRYSTALLOGRAPHY (1.8 ANGSTROMS) OF 18-349</scope>
    <scope>DISULFIDE BONDS</scope>
    <scope>GLYCOSYLATION AT ASN-122 AND ASN-128</scope>
</reference>
<reference key="8">
    <citation type="journal article" date="2019" name="Am. J. Hum. Genet.">
        <title>Homozygous Missense Variants in NTNG2, Encoding a Presynaptic Netrin-G2 Adhesion Protein, Lead to a Distinct Neurodevelopmental Disorder.</title>
        <authorList>
            <person name="Dias C.M."/>
            <person name="Punetha J."/>
            <person name="Zheng C."/>
            <person name="Mazaheri N."/>
            <person name="Rad A."/>
            <person name="Efthymiou S."/>
            <person name="Petersen A."/>
            <person name="Dehghani M."/>
            <person name="Pehlivan D."/>
            <person name="Partlow J.N."/>
            <person name="Posey J.E."/>
            <person name="Salpietro V."/>
            <person name="Gezdirici A."/>
            <person name="Malamiri R.A."/>
            <person name="Al Menabawy N.M."/>
            <person name="Selim L.A."/>
            <person name="Vahidi Mehrjardi M.Y."/>
            <person name="Banu S."/>
            <person name="Polla D.L."/>
            <person name="Yang E."/>
            <person name="Rezazadeh Varaghchi J."/>
            <person name="Mitani T."/>
            <person name="van Beusekom E."/>
            <person name="Najafi M."/>
            <person name="Sedaghat A."/>
            <person name="Keller-Ramey J."/>
            <person name="Durham L."/>
            <person name="Coban-Akdemir Z."/>
            <person name="Karaca E."/>
            <person name="Orlova V."/>
            <person name="Schaeken L.L.M."/>
            <person name="Sherafat A."/>
            <person name="Jhangiani S.N."/>
            <person name="Stanley V."/>
            <person name="Shariati G."/>
            <person name="Galehdari H."/>
            <person name="Gleeson J.G."/>
            <person name="Walsh C.A."/>
            <person name="Lupski J.R."/>
            <person name="Seiradake E."/>
            <person name="Houlden H."/>
            <person name="van Bokhoven H."/>
            <person name="Maroofian R."/>
        </authorList>
    </citation>
    <scope>INVOLVEMENT IN NEDBASH</scope>
    <scope>VARIANTS NEDBASH TYR-81; GLY-107; THR-149; LEU-200; TRP-355; CYS-359 AND TYR-456</scope>
    <scope>CHARACTERIZATION OF VARIANTS NEDBASH TYR-81; GLY-107; THR-149; LEU-200; TRP-355; CYS-359 AND TYR-456</scope>
    <scope>SUBCELLULAR LOCATION</scope>
</reference>
<reference key="9">
    <citation type="journal article" date="2020" name="Hum. Mutat.">
        <title>Netrin-G2 dysfunction causes a Rett-like phenotype with areflexia.</title>
        <authorList>
            <person name="Heimer G."/>
            <person name="van Woerden G.M."/>
            <person name="Barel O."/>
            <person name="Marek-Yagel D."/>
            <person name="Kol N."/>
            <person name="Munting J.B."/>
            <person name="Borghei M."/>
            <person name="Atawneh O.M."/>
            <person name="Nissenkorn A."/>
            <person name="Rechavi G."/>
            <person name="Anikster Y."/>
            <person name="Elgersma Y."/>
            <person name="Kushner S.A."/>
            <person name="Ben Zeev B."/>
        </authorList>
    </citation>
    <scope>INVOLVEMENT IN NEDBASH</scope>
</reference>
<reference key="10">
    <citation type="journal article" date="2019" name="Neurogenetics">
        <title>Homozygous frameshift variant in NTNG2, encoding a synaptic cell adhesion molecule, in individuals with developmental delay, hypotonia, and autistic features.</title>
        <authorList>
            <person name="Abu-Libdeh B."/>
            <person name="Ashhab M."/>
            <person name="Shahrour M."/>
            <person name="Daana M."/>
            <person name="Dudin A."/>
            <person name="Elpeleg O."/>
            <person name="Edvardson S."/>
            <person name="Harel T."/>
        </authorList>
    </citation>
    <scope>INVOLVEMENT IN NEDBASH</scope>
</reference>
<dbReference type="EMBL" id="AB058760">
    <property type="protein sequence ID" value="BAB47486.2"/>
    <property type="status" value="ALT_INIT"/>
    <property type="molecule type" value="mRNA"/>
</dbReference>
<dbReference type="EMBL" id="AY358165">
    <property type="protein sequence ID" value="AAQ88532.1"/>
    <property type="molecule type" value="mRNA"/>
</dbReference>
<dbReference type="EMBL" id="AL353631">
    <property type="status" value="NOT_ANNOTATED_CDS"/>
    <property type="molecule type" value="Genomic_DNA"/>
</dbReference>
<dbReference type="EMBL" id="AL159997">
    <property type="status" value="NOT_ANNOTATED_CDS"/>
    <property type="molecule type" value="Genomic_DNA"/>
</dbReference>
<dbReference type="EMBL" id="BC013770">
    <property type="protein sequence ID" value="AAH13770.1"/>
    <property type="molecule type" value="mRNA"/>
</dbReference>
<dbReference type="CCDS" id="CCDS6946.1">
    <molecule id="Q96CW9-1"/>
</dbReference>
<dbReference type="RefSeq" id="NP_115925.2">
    <molecule id="Q96CW9-1"/>
    <property type="nucleotide sequence ID" value="NM_032536.4"/>
</dbReference>
<dbReference type="RefSeq" id="XP_011517409.1">
    <molecule id="Q96CW9-1"/>
    <property type="nucleotide sequence ID" value="XM_011519107.3"/>
</dbReference>
<dbReference type="PDB" id="3TBD">
    <property type="method" value="X-ray"/>
    <property type="resolution" value="1.80 A"/>
    <property type="chains" value="A=18-349"/>
</dbReference>
<dbReference type="PDB" id="3ZYG">
    <property type="method" value="X-ray"/>
    <property type="resolution" value="2.20 A"/>
    <property type="chains" value="A/B=1-345"/>
</dbReference>
<dbReference type="PDB" id="3ZYI">
    <property type="method" value="X-ray"/>
    <property type="resolution" value="2.60 A"/>
    <property type="chains" value="B=1-345"/>
</dbReference>
<dbReference type="PDBsum" id="3TBD"/>
<dbReference type="PDBsum" id="3ZYG"/>
<dbReference type="PDBsum" id="3ZYI"/>
<dbReference type="SMR" id="Q96CW9"/>
<dbReference type="BioGRID" id="124157">
    <property type="interactions" value="7"/>
</dbReference>
<dbReference type="FunCoup" id="Q96CW9">
    <property type="interactions" value="332"/>
</dbReference>
<dbReference type="IntAct" id="Q96CW9">
    <property type="interactions" value="6"/>
</dbReference>
<dbReference type="MINT" id="Q96CW9"/>
<dbReference type="STRING" id="9606.ENSP00000376921"/>
<dbReference type="GlyCosmos" id="Q96CW9">
    <property type="glycosylation" value="5 sites, No reported glycans"/>
</dbReference>
<dbReference type="GlyGen" id="Q96CW9">
    <property type="glycosylation" value="7 sites, 1 O-linked glycan (1 site)"/>
</dbReference>
<dbReference type="iPTMnet" id="Q96CW9"/>
<dbReference type="PhosphoSitePlus" id="Q96CW9"/>
<dbReference type="BioMuta" id="NTNG2"/>
<dbReference type="DMDM" id="317373402"/>
<dbReference type="MassIVE" id="Q96CW9"/>
<dbReference type="PaxDb" id="9606-ENSP00000376921"/>
<dbReference type="PeptideAtlas" id="Q96CW9"/>
<dbReference type="ProteomicsDB" id="76235">
    <molecule id="Q96CW9-1"/>
</dbReference>
<dbReference type="ProteomicsDB" id="76236">
    <molecule id="Q96CW9-2"/>
</dbReference>
<dbReference type="Antibodypedia" id="31663">
    <property type="antibodies" value="107 antibodies from 25 providers"/>
</dbReference>
<dbReference type="DNASU" id="84628"/>
<dbReference type="Ensembl" id="ENST00000393229.4">
    <molecule id="Q96CW9-1"/>
    <property type="protein sequence ID" value="ENSP00000376921.3"/>
    <property type="gene ID" value="ENSG00000196358.12"/>
</dbReference>
<dbReference type="GeneID" id="84628"/>
<dbReference type="KEGG" id="hsa:84628"/>
<dbReference type="MANE-Select" id="ENST00000393229.4">
    <property type="protein sequence ID" value="ENSP00000376921.3"/>
    <property type="RefSeq nucleotide sequence ID" value="NM_032536.4"/>
    <property type="RefSeq protein sequence ID" value="NP_115925.2"/>
</dbReference>
<dbReference type="UCSC" id="uc004cbh.3">
    <molecule id="Q96CW9-1"/>
    <property type="organism name" value="human"/>
</dbReference>
<dbReference type="AGR" id="HGNC:14288"/>
<dbReference type="CTD" id="84628"/>
<dbReference type="DisGeNET" id="84628"/>
<dbReference type="GeneCards" id="NTNG2"/>
<dbReference type="HGNC" id="HGNC:14288">
    <property type="gene designation" value="NTNG2"/>
</dbReference>
<dbReference type="HPA" id="ENSG00000196358">
    <property type="expression patterns" value="Group enriched (bone marrow, brain, retina)"/>
</dbReference>
<dbReference type="MalaCards" id="NTNG2"/>
<dbReference type="MIM" id="618689">
    <property type="type" value="gene"/>
</dbReference>
<dbReference type="MIM" id="618718">
    <property type="type" value="phenotype"/>
</dbReference>
<dbReference type="neXtProt" id="NX_Q96CW9"/>
<dbReference type="OpenTargets" id="ENSG00000196358"/>
<dbReference type="Orphanet" id="528084">
    <property type="disease" value="Non-specific syndromic intellectual disability"/>
</dbReference>
<dbReference type="PharmGKB" id="PA134962540"/>
<dbReference type="VEuPathDB" id="HostDB:ENSG00000196358"/>
<dbReference type="eggNOG" id="KOG3512">
    <property type="taxonomic scope" value="Eukaryota"/>
</dbReference>
<dbReference type="GeneTree" id="ENSGT00940000153601"/>
<dbReference type="HOGENOM" id="CLU_039838_1_0_1"/>
<dbReference type="InParanoid" id="Q96CW9"/>
<dbReference type="OMA" id="AGPDCEC"/>
<dbReference type="OrthoDB" id="9981301at2759"/>
<dbReference type="PAN-GO" id="Q96CW9">
    <property type="GO annotations" value="6 GO annotations based on evolutionary models"/>
</dbReference>
<dbReference type="PhylomeDB" id="Q96CW9"/>
<dbReference type="TreeFam" id="TF333945"/>
<dbReference type="PathwayCommons" id="Q96CW9"/>
<dbReference type="Reactome" id="R-HSA-163125">
    <property type="pathway name" value="Post-translational modification: synthesis of GPI-anchored proteins"/>
</dbReference>
<dbReference type="SignaLink" id="Q96CW9"/>
<dbReference type="SIGNOR" id="Q96CW9"/>
<dbReference type="BioGRID-ORCS" id="84628">
    <property type="hits" value="13 hits in 1144 CRISPR screens"/>
</dbReference>
<dbReference type="CD-CODE" id="91857CE7">
    <property type="entry name" value="Nucleolus"/>
</dbReference>
<dbReference type="ChiTaRS" id="NTNG2">
    <property type="organism name" value="human"/>
</dbReference>
<dbReference type="EvolutionaryTrace" id="Q96CW9"/>
<dbReference type="GeneWiki" id="NTNG2"/>
<dbReference type="GenomeRNAi" id="84628"/>
<dbReference type="Pharos" id="Q96CW9">
    <property type="development level" value="Tbio"/>
</dbReference>
<dbReference type="PRO" id="PR:Q96CW9"/>
<dbReference type="Proteomes" id="UP000005640">
    <property type="component" value="Chromosome 9"/>
</dbReference>
<dbReference type="RNAct" id="Q96CW9">
    <property type="molecule type" value="protein"/>
</dbReference>
<dbReference type="Bgee" id="ENSG00000196358">
    <property type="expression patterns" value="Expressed in pancreatic ductal cell and 106 other cell types or tissues"/>
</dbReference>
<dbReference type="GO" id="GO:0030424">
    <property type="term" value="C:axon"/>
    <property type="evidence" value="ECO:0007669"/>
    <property type="project" value="Ensembl"/>
</dbReference>
<dbReference type="GO" id="GO:0005576">
    <property type="term" value="C:extracellular region"/>
    <property type="evidence" value="ECO:0000304"/>
    <property type="project" value="Reactome"/>
</dbReference>
<dbReference type="GO" id="GO:0098978">
    <property type="term" value="C:glutamatergic synapse"/>
    <property type="evidence" value="ECO:0007669"/>
    <property type="project" value="Ensembl"/>
</dbReference>
<dbReference type="GO" id="GO:0005886">
    <property type="term" value="C:plasma membrane"/>
    <property type="evidence" value="ECO:0000250"/>
    <property type="project" value="UniProtKB"/>
</dbReference>
<dbReference type="GO" id="GO:0048787">
    <property type="term" value="C:presynaptic active zone membrane"/>
    <property type="evidence" value="ECO:0007669"/>
    <property type="project" value="Ensembl"/>
</dbReference>
<dbReference type="GO" id="GO:0098685">
    <property type="term" value="C:Schaffer collateral - CA1 synapse"/>
    <property type="evidence" value="ECO:0007669"/>
    <property type="project" value="Ensembl"/>
</dbReference>
<dbReference type="GO" id="GO:0098552">
    <property type="term" value="C:side of membrane"/>
    <property type="evidence" value="ECO:0007669"/>
    <property type="project" value="UniProtKB-KW"/>
</dbReference>
<dbReference type="GO" id="GO:0007409">
    <property type="term" value="P:axonogenesis"/>
    <property type="evidence" value="ECO:0000250"/>
    <property type="project" value="UniProtKB"/>
</dbReference>
<dbReference type="GO" id="GO:0050804">
    <property type="term" value="P:modulation of chemical synaptic transmission"/>
    <property type="evidence" value="ECO:0007669"/>
    <property type="project" value="Ensembl"/>
</dbReference>
<dbReference type="GO" id="GO:0098698">
    <property type="term" value="P:postsynaptic specialization assembly"/>
    <property type="evidence" value="ECO:0007669"/>
    <property type="project" value="Ensembl"/>
</dbReference>
<dbReference type="GO" id="GO:2001222">
    <property type="term" value="P:regulation of neuron migration"/>
    <property type="evidence" value="ECO:0000250"/>
    <property type="project" value="UniProtKB"/>
</dbReference>
<dbReference type="GO" id="GO:0150011">
    <property type="term" value="P:regulation of neuron projection arborization"/>
    <property type="evidence" value="ECO:0000250"/>
    <property type="project" value="UniProtKB"/>
</dbReference>
<dbReference type="GO" id="GO:0010975">
    <property type="term" value="P:regulation of neuron projection development"/>
    <property type="evidence" value="ECO:0000250"/>
    <property type="project" value="UniProtKB"/>
</dbReference>
<dbReference type="GO" id="GO:1905606">
    <property type="term" value="P:regulation of presynapse assembly"/>
    <property type="evidence" value="ECO:0007669"/>
    <property type="project" value="Ensembl"/>
</dbReference>
<dbReference type="GO" id="GO:0099560">
    <property type="term" value="P:synaptic membrane adhesion"/>
    <property type="evidence" value="ECO:0007669"/>
    <property type="project" value="Ensembl"/>
</dbReference>
<dbReference type="CDD" id="cd00054">
    <property type="entry name" value="EGF_CA"/>
    <property type="match status" value="1"/>
</dbReference>
<dbReference type="CDD" id="cd00055">
    <property type="entry name" value="EGF_Lam"/>
    <property type="match status" value="3"/>
</dbReference>
<dbReference type="FunFam" id="2.10.25.10:FF:000112">
    <property type="entry name" value="Netrin G1"/>
    <property type="match status" value="1"/>
</dbReference>
<dbReference type="FunFam" id="2.60.120.260:FF:000005">
    <property type="entry name" value="Netrin G1"/>
    <property type="match status" value="1"/>
</dbReference>
<dbReference type="FunFam" id="2.10.25.10:FF:000180">
    <property type="entry name" value="Netrin G2"/>
    <property type="match status" value="1"/>
</dbReference>
<dbReference type="FunFam" id="2.10.25.10:FF:000439">
    <property type="entry name" value="Netrin G2"/>
    <property type="match status" value="1"/>
</dbReference>
<dbReference type="FunFam" id="2.10.25.10:FF:001161">
    <property type="entry name" value="Netrin-G2"/>
    <property type="match status" value="1"/>
</dbReference>
<dbReference type="Gene3D" id="2.60.120.260">
    <property type="entry name" value="Galactose-binding domain-like"/>
    <property type="match status" value="1"/>
</dbReference>
<dbReference type="Gene3D" id="2.10.25.10">
    <property type="entry name" value="Laminin"/>
    <property type="match status" value="4"/>
</dbReference>
<dbReference type="InterPro" id="IPR000742">
    <property type="entry name" value="EGF-like_dom"/>
</dbReference>
<dbReference type="InterPro" id="IPR050440">
    <property type="entry name" value="Laminin/Netrin_ECM"/>
</dbReference>
<dbReference type="InterPro" id="IPR008211">
    <property type="entry name" value="Laminin_N"/>
</dbReference>
<dbReference type="InterPro" id="IPR002049">
    <property type="entry name" value="LE_dom"/>
</dbReference>
<dbReference type="InterPro" id="IPR056863">
    <property type="entry name" value="LMN_ATRN_NET-like_EGF"/>
</dbReference>
<dbReference type="PANTHER" id="PTHR10574:SF27">
    <property type="entry name" value="NETRIN-G2"/>
    <property type="match status" value="1"/>
</dbReference>
<dbReference type="PANTHER" id="PTHR10574">
    <property type="entry name" value="NETRIN/LAMININ-RELATED"/>
    <property type="match status" value="1"/>
</dbReference>
<dbReference type="Pfam" id="PF00053">
    <property type="entry name" value="EGF_laminin"/>
    <property type="match status" value="2"/>
</dbReference>
<dbReference type="Pfam" id="PF24973">
    <property type="entry name" value="EGF_LMN_ATRN"/>
    <property type="match status" value="1"/>
</dbReference>
<dbReference type="Pfam" id="PF00055">
    <property type="entry name" value="Laminin_N"/>
    <property type="match status" value="1"/>
</dbReference>
<dbReference type="SMART" id="SM00181">
    <property type="entry name" value="EGF"/>
    <property type="match status" value="1"/>
</dbReference>
<dbReference type="SMART" id="SM00180">
    <property type="entry name" value="EGF_Lam"/>
    <property type="match status" value="3"/>
</dbReference>
<dbReference type="SMART" id="SM00136">
    <property type="entry name" value="LamNT"/>
    <property type="match status" value="1"/>
</dbReference>
<dbReference type="SUPFAM" id="SSF57196">
    <property type="entry name" value="EGF/Laminin"/>
    <property type="match status" value="4"/>
</dbReference>
<dbReference type="PROSITE" id="PS00022">
    <property type="entry name" value="EGF_1"/>
    <property type="match status" value="3"/>
</dbReference>
<dbReference type="PROSITE" id="PS01186">
    <property type="entry name" value="EGF_2"/>
    <property type="match status" value="1"/>
</dbReference>
<dbReference type="PROSITE" id="PS50026">
    <property type="entry name" value="EGF_3"/>
    <property type="match status" value="1"/>
</dbReference>
<dbReference type="PROSITE" id="PS01248">
    <property type="entry name" value="EGF_LAM_1"/>
    <property type="match status" value="2"/>
</dbReference>
<dbReference type="PROSITE" id="PS50027">
    <property type="entry name" value="EGF_LAM_2"/>
    <property type="match status" value="3"/>
</dbReference>
<dbReference type="PROSITE" id="PS51117">
    <property type="entry name" value="LAMININ_NTER"/>
    <property type="match status" value="1"/>
</dbReference>
<keyword id="KW-0002">3D-structure</keyword>
<keyword id="KW-0025">Alternative splicing</keyword>
<keyword id="KW-1268">Autism spectrum disorder</keyword>
<keyword id="KW-1003">Cell membrane</keyword>
<keyword id="KW-0217">Developmental protein</keyword>
<keyword id="KW-0221">Differentiation</keyword>
<keyword id="KW-0225">Disease variant</keyword>
<keyword id="KW-1015">Disulfide bond</keyword>
<keyword id="KW-0325">Glycoprotein</keyword>
<keyword id="KW-0336">GPI-anchor</keyword>
<keyword id="KW-0991">Intellectual disability</keyword>
<keyword id="KW-0424">Laminin EGF-like domain</keyword>
<keyword id="KW-0449">Lipoprotein</keyword>
<keyword id="KW-0472">Membrane</keyword>
<keyword id="KW-0524">Neurogenesis</keyword>
<keyword id="KW-1267">Proteomics identification</keyword>
<keyword id="KW-1185">Reference proteome</keyword>
<keyword id="KW-0677">Repeat</keyword>
<keyword id="KW-0732">Signal</keyword>
<evidence type="ECO:0000250" key="1"/>
<evidence type="ECO:0000250" key="2">
    <source>
        <dbReference type="UniProtKB" id="Q8R4F1"/>
    </source>
</evidence>
<evidence type="ECO:0000255" key="3"/>
<evidence type="ECO:0000255" key="4">
    <source>
        <dbReference type="PROSITE-ProRule" id="PRU00460"/>
    </source>
</evidence>
<evidence type="ECO:0000255" key="5">
    <source>
        <dbReference type="PROSITE-ProRule" id="PRU00466"/>
    </source>
</evidence>
<evidence type="ECO:0000269" key="6">
    <source>
    </source>
</evidence>
<evidence type="ECO:0000269" key="7">
    <source>
    </source>
</evidence>
<evidence type="ECO:0000269" key="8">
    <source>
    </source>
</evidence>
<evidence type="ECO:0000269" key="9">
    <source>
    </source>
</evidence>
<evidence type="ECO:0000269" key="10">
    <source>
    </source>
</evidence>
<evidence type="ECO:0000269" key="11">
    <source>
    </source>
</evidence>
<evidence type="ECO:0000269" key="12">
    <source>
    </source>
</evidence>
<evidence type="ECO:0000269" key="13">
    <source>
    </source>
</evidence>
<evidence type="ECO:0000303" key="14">
    <source>
    </source>
</evidence>
<evidence type="ECO:0000305" key="15"/>
<evidence type="ECO:0000312" key="16">
    <source>
        <dbReference type="EMBL" id="AAH13770.1"/>
    </source>
</evidence>
<evidence type="ECO:0000312" key="17">
    <source>
        <dbReference type="EMBL" id="BAB47486.2"/>
    </source>
</evidence>
<evidence type="ECO:0000312" key="18">
    <source>
        <dbReference type="HGNC" id="HGNC:14288"/>
    </source>
</evidence>
<evidence type="ECO:0007829" key="19">
    <source>
        <dbReference type="PDB" id="3TBD"/>
    </source>
</evidence>
<evidence type="ECO:0007829" key="20">
    <source>
        <dbReference type="PDB" id="3ZYG"/>
    </source>
</evidence>
<evidence type="ECO:0007829" key="21">
    <source>
        <dbReference type="PDB" id="3ZYI"/>
    </source>
</evidence>
<protein>
    <recommendedName>
        <fullName evidence="15">Netrin-G2</fullName>
    </recommendedName>
    <alternativeName>
        <fullName>Laminet-2</fullName>
    </alternativeName>
</protein>
<accession>Q96CW9</accession>
<accession>Q5JUJ2</accession>
<accession>Q6UXY0</accession>
<accession>Q96JH0</accession>
<gene>
    <name evidence="18" type="primary">NTNG2</name>
    <name type="synonym">KIAA1857</name>
    <name type="synonym">LMNT2</name>
    <name type="ORF">UNQ9381/PRO34206</name>
</gene>
<organism evidence="16">
    <name type="scientific">Homo sapiens</name>
    <name type="common">Human</name>
    <dbReference type="NCBI Taxonomy" id="9606"/>
    <lineage>
        <taxon>Eukaryota</taxon>
        <taxon>Metazoa</taxon>
        <taxon>Chordata</taxon>
        <taxon>Craniata</taxon>
        <taxon>Vertebrata</taxon>
        <taxon>Euteleostomi</taxon>
        <taxon>Mammalia</taxon>
        <taxon>Eutheria</taxon>
        <taxon>Euarchontoglires</taxon>
        <taxon>Primates</taxon>
        <taxon>Haplorrhini</taxon>
        <taxon>Catarrhini</taxon>
        <taxon>Hominidae</taxon>
        <taxon>Homo</taxon>
    </lineage>
</organism>
<sequence>MLHLLALFLHCLPLASGDYDICKSWVTTDEGPTWEFYACQPKVMRLKDYVKVKVEPSGITCGDPPERFCSHENPYLCSNECDASNPDLAHPPRLMFDKEEEGLATYWQSITWSRYPSPLEANITLSWNKTVELTDDVVMTFEYGRPTVMVLEKSLDNGRTWQPYQFYAEDCMEAFGMSARRARDMSSSSAHRVLCTEEYSRWAGSKKEKHVRFEVRDRFAIFAGPDLRNMDNLYTRLESAKGLKEFFTLTDLRMRLLRPALGGTYVQRENLYKYFYAISNIEVIGRCKCNLHANLCSMREGSLQCECEHNTTGPDCGKCKKNFRTRSWRAGSYLPLPHGSPNACATAGSFGNCECYGHSNRCSYIDFLNVVTCVSCKHNTRGQHCQHCRLGYYRNGSAELDDENVCIECNCNQIGSVHDRCNETGFCECREGAAGPKCDDCLPTHYWRQGCYPNVCDDDQLLCQNGGTCLQNQRCACPRGYTGVRCEQPRCDPADDDGGLDCDRAPGAAPRPATLLGCLLLLGLAARLGR</sequence>
<feature type="signal peptide" evidence="3">
    <location>
        <begin position="1"/>
        <end position="17"/>
    </location>
</feature>
<feature type="chain" id="PRO_0000017095" description="Netrin-G2">
    <location>
        <begin position="18"/>
        <end position="507"/>
    </location>
</feature>
<feature type="propeptide" id="PRO_0000017096" description="Removed in mature form" evidence="3">
    <location>
        <begin position="508"/>
        <end position="530"/>
    </location>
</feature>
<feature type="domain" description="Laminin N-terminal" evidence="5">
    <location>
        <begin position="35"/>
        <end position="286"/>
    </location>
</feature>
<feature type="domain" description="Laminin EGF-like 1" evidence="4">
    <location>
        <begin position="287"/>
        <end position="346"/>
    </location>
</feature>
<feature type="domain" description="Laminin EGF-like 2" evidence="4">
    <location>
        <begin position="353"/>
        <end position="408"/>
    </location>
</feature>
<feature type="domain" description="Laminin EGF-like 3" evidence="4">
    <location>
        <begin position="409"/>
        <end position="453"/>
    </location>
</feature>
<feature type="region of interest" description="NGL discriminant loop I">
    <location>
        <begin position="69"/>
        <end position="88"/>
    </location>
</feature>
<feature type="region of interest" description="NGL discriminant loop II">
    <location>
        <begin position="201"/>
        <end position="203"/>
    </location>
</feature>
<feature type="region of interest" description="NGL discriminant loop III">
    <location>
        <begin position="264"/>
        <end position="267"/>
    </location>
</feature>
<feature type="lipid moiety-binding region" description="GPI-anchor amidated glycine" evidence="3">
    <location>
        <position position="507"/>
    </location>
</feature>
<feature type="glycosylation site" description="N-linked (GlcNAc...) asparagine" evidence="10">
    <location>
        <position position="122"/>
    </location>
</feature>
<feature type="glycosylation site" description="N-linked (GlcNAc...) asparagine" evidence="10">
    <location>
        <position position="128"/>
    </location>
</feature>
<feature type="glycosylation site" description="N-linked (GlcNAc...) asparagine" evidence="3">
    <location>
        <position position="310"/>
    </location>
</feature>
<feature type="glycosylation site" description="N-linked (GlcNAc...) asparagine" evidence="3">
    <location>
        <position position="395"/>
    </location>
</feature>
<feature type="glycosylation site" description="N-linked (GlcNAc...) asparagine" evidence="3">
    <location>
        <position position="422"/>
    </location>
</feature>
<feature type="disulfide bond" evidence="10">
    <location>
        <begin position="22"/>
        <end position="39"/>
    </location>
</feature>
<feature type="disulfide bond" evidence="10">
    <location>
        <begin position="61"/>
        <end position="81"/>
    </location>
</feature>
<feature type="disulfide bond" evidence="10">
    <location>
        <begin position="69"/>
        <end position="77"/>
    </location>
</feature>
<feature type="disulfide bond" evidence="10">
    <location>
        <begin position="171"/>
        <end position="195"/>
    </location>
</feature>
<feature type="disulfide bond" evidence="10">
    <location>
        <begin position="287"/>
        <end position="296"/>
    </location>
</feature>
<feature type="disulfide bond" evidence="10">
    <location>
        <begin position="289"/>
        <end position="305"/>
    </location>
</feature>
<feature type="disulfide bond" evidence="10">
    <location>
        <begin position="307"/>
        <end position="316"/>
    </location>
</feature>
<feature type="disulfide bond" evidence="10">
    <location>
        <begin position="319"/>
        <end position="344"/>
    </location>
</feature>
<feature type="disulfide bond" evidence="3">
    <location>
        <begin position="353"/>
        <end position="362"/>
    </location>
</feature>
<feature type="disulfide bond" evidence="3">
    <location>
        <begin position="355"/>
        <end position="373"/>
    </location>
</feature>
<feature type="disulfide bond" evidence="3">
    <location>
        <begin position="376"/>
        <end position="385"/>
    </location>
</feature>
<feature type="disulfide bond" evidence="3">
    <location>
        <begin position="388"/>
        <end position="406"/>
    </location>
</feature>
<feature type="disulfide bond" evidence="3">
    <location>
        <begin position="409"/>
        <end position="421"/>
    </location>
</feature>
<feature type="disulfide bond" evidence="3">
    <location>
        <begin position="411"/>
        <end position="427"/>
    </location>
</feature>
<feature type="disulfide bond" evidence="3">
    <location>
        <begin position="429"/>
        <end position="438"/>
    </location>
</feature>
<feature type="disulfide bond" evidence="3">
    <location>
        <begin position="441"/>
        <end position="451"/>
    </location>
</feature>
<feature type="disulfide bond" evidence="1">
    <location>
        <begin position="456"/>
        <end position="469"/>
    </location>
</feature>
<feature type="disulfide bond" evidence="1">
    <location>
        <begin position="463"/>
        <end position="475"/>
    </location>
</feature>
<feature type="disulfide bond" evidence="1">
    <location>
        <begin position="477"/>
        <end position="486"/>
    </location>
</feature>
<feature type="splice variant" id="VSP_013147" description="In isoform 2." evidence="14">
    <original>NCECYGHSNRCSYIDFLNVVTCVSCKHNTRGQHCQHCRLGYYRNGSAELDDENVCIECNCNQIGSVHDRCN</original>
    <variation>TLQTPPPGRSPSALRGSRRGLANVKEPAGSRPQISEMLLGCTVTLHQGSVGPHIPPKLSLPDPGGPWLGSQ</variation>
    <location>
        <begin position="352"/>
        <end position="422"/>
    </location>
</feature>
<feature type="splice variant" id="VSP_013148" description="In isoform 2." evidence="14">
    <location>
        <begin position="423"/>
        <end position="530"/>
    </location>
</feature>
<feature type="sequence variant" id="VAR_083458" description="In NEDBASH; highly decreased cell surface expression; dbSNP:rs1589440982." evidence="12">
    <original>C</original>
    <variation>Y</variation>
    <location>
        <position position="81"/>
    </location>
</feature>
<feature type="sequence variant" id="VAR_083459" description="In NEDBASH; abolished cell surface expression; dbSNP:rs1589441229." evidence="12">
    <original>W</original>
    <variation>G</variation>
    <location>
        <position position="107"/>
    </location>
</feature>
<feature type="sequence variant" id="VAR_083460" description="In NEDBASH; abolished cell surface expression; dbSNP:rs1589441679." evidence="12">
    <original>M</original>
    <variation>T</variation>
    <location>
        <position position="149"/>
    </location>
</feature>
<feature type="sequence variant" id="VAR_083461" description="In NEDBASH; almost abolished cell surface expression; dbSNP:rs1227245973." evidence="12">
    <original>S</original>
    <variation>L</variation>
    <location>
        <position position="200"/>
    </location>
</feature>
<feature type="sequence variant" id="VAR_047847" description="In dbSNP:rs4962173." evidence="6 7 8">
    <original>T</original>
    <variation>A</variation>
    <location>
        <position position="346"/>
    </location>
</feature>
<feature type="sequence variant" id="VAR_083462" description="In NEDBASH; highly decreased cell surface expression; dbSNP:rs1589568476." evidence="12">
    <original>C</original>
    <variation>W</variation>
    <location>
        <position position="355"/>
    </location>
</feature>
<feature type="sequence variant" id="VAR_083463" description="In NEDBASH; highly decreased cell surface expression; dbSNP:rs1589568530." evidence="12">
    <original>S</original>
    <variation>C</variation>
    <location>
        <position position="359"/>
    </location>
</feature>
<feature type="sequence variant" id="VAR_083464" description="In NEDBASH; highly decreased cell surface expression; dbSNP:rs1589576879." evidence="12">
    <original>C</original>
    <variation>Y</variation>
    <location>
        <position position="456"/>
    </location>
</feature>
<feature type="strand" evidence="19">
    <location>
        <begin position="22"/>
        <end position="28"/>
    </location>
</feature>
<feature type="strand" evidence="19">
    <location>
        <begin position="31"/>
        <end position="36"/>
    </location>
</feature>
<feature type="helix" evidence="19">
    <location>
        <begin position="46"/>
        <end position="49"/>
    </location>
</feature>
<feature type="strand" evidence="19">
    <location>
        <begin position="51"/>
        <end position="56"/>
    </location>
</feature>
<feature type="strand" evidence="19">
    <location>
        <begin position="66"/>
        <end position="68"/>
    </location>
</feature>
<feature type="strand" evidence="20">
    <location>
        <begin position="71"/>
        <end position="73"/>
    </location>
</feature>
<feature type="turn" evidence="20">
    <location>
        <begin position="74"/>
        <end position="76"/>
    </location>
</feature>
<feature type="strand" evidence="19">
    <location>
        <begin position="79"/>
        <end position="81"/>
    </location>
</feature>
<feature type="strand" evidence="21">
    <location>
        <begin position="83"/>
        <end position="85"/>
    </location>
</feature>
<feature type="turn" evidence="19">
    <location>
        <begin position="86"/>
        <end position="88"/>
    </location>
</feature>
<feature type="helix" evidence="19">
    <location>
        <begin position="92"/>
        <end position="95"/>
    </location>
</feature>
<feature type="strand" evidence="19">
    <location>
        <begin position="107"/>
        <end position="109"/>
    </location>
</feature>
<feature type="turn" evidence="19">
    <location>
        <begin position="113"/>
        <end position="116"/>
    </location>
</feature>
<feature type="strand" evidence="19">
    <location>
        <begin position="121"/>
        <end position="133"/>
    </location>
</feature>
<feature type="strand" evidence="19">
    <location>
        <begin position="137"/>
        <end position="143"/>
    </location>
</feature>
<feature type="strand" evidence="19">
    <location>
        <begin position="147"/>
        <end position="156"/>
    </location>
</feature>
<feature type="strand" evidence="19">
    <location>
        <begin position="162"/>
        <end position="170"/>
    </location>
</feature>
<feature type="helix" evidence="19">
    <location>
        <begin position="171"/>
        <end position="175"/>
    </location>
</feature>
<feature type="helix" evidence="19">
    <location>
        <begin position="182"/>
        <end position="184"/>
    </location>
</feature>
<feature type="helix" evidence="19">
    <location>
        <begin position="187"/>
        <end position="189"/>
    </location>
</feature>
<feature type="turn" evidence="19">
    <location>
        <begin position="198"/>
        <end position="204"/>
    </location>
</feature>
<feature type="strand" evidence="21">
    <location>
        <begin position="205"/>
        <end position="207"/>
    </location>
</feature>
<feature type="strand" evidence="19">
    <location>
        <begin position="210"/>
        <end position="213"/>
    </location>
</feature>
<feature type="helix" evidence="19">
    <location>
        <begin position="216"/>
        <end position="223"/>
    </location>
</feature>
<feature type="turn" evidence="19">
    <location>
        <begin position="224"/>
        <end position="227"/>
    </location>
</feature>
<feature type="helix" evidence="19">
    <location>
        <begin position="230"/>
        <end position="239"/>
    </location>
</feature>
<feature type="helix" evidence="19">
    <location>
        <begin position="243"/>
        <end position="246"/>
    </location>
</feature>
<feature type="strand" evidence="19">
    <location>
        <begin position="248"/>
        <end position="258"/>
    </location>
</feature>
<feature type="helix" evidence="19">
    <location>
        <begin position="271"/>
        <end position="273"/>
    </location>
</feature>
<feature type="strand" evidence="19">
    <location>
        <begin position="277"/>
        <end position="282"/>
    </location>
</feature>
<feature type="strand" evidence="19">
    <location>
        <begin position="284"/>
        <end position="287"/>
    </location>
</feature>
<feature type="strand" evidence="19">
    <location>
        <begin position="296"/>
        <end position="299"/>
    </location>
</feature>
<feature type="strand" evidence="19">
    <location>
        <begin position="302"/>
        <end position="305"/>
    </location>
</feature>
<feature type="strand" evidence="19">
    <location>
        <begin position="311"/>
        <end position="313"/>
    </location>
</feature>
<feature type="strand" evidence="19">
    <location>
        <begin position="324"/>
        <end position="326"/>
    </location>
</feature>
<feature type="turn" evidence="19">
    <location>
        <begin position="336"/>
        <end position="338"/>
    </location>
</feature>
<proteinExistence type="evidence at protein level"/>
<name>NTNG2_HUMAN</name>
<comment type="function">
    <text evidence="9">Involved in controlling patterning and neuronal circuit formation at the laminar, cellular, subcellular and synaptic levels. Promotes neurite outgrowth of both axons and dendrites.</text>
</comment>
<comment type="subunit">
    <text evidence="2">Interacts with LRRC4.</text>
</comment>
<comment type="interaction">
    <interactant intactId="EBI-750795">
        <id>Q96CW9</id>
    </interactant>
    <interactant intactId="EBI-7444327">
        <id>Q9HBW1</id>
        <label>LRRC4</label>
    </interactant>
    <organismsDiffer>false</organismsDiffer>
    <experiments>4</experiments>
</comment>
<comment type="interaction">
    <interactant intactId="EBI-750795">
        <id>Q96CW9</id>
    </interactant>
    <interactant intactId="EBI-3925442">
        <id>Q9HCJ2</id>
        <label>LRRC4C</label>
    </interactant>
    <organismsDiffer>false</organismsDiffer>
    <experiments>2</experiments>
</comment>
<comment type="subcellular location">
    <subcellularLocation>
        <location evidence="9 12">Cell membrane</location>
        <topology evidence="9">Lipid-anchor</topology>
        <topology evidence="9">GPI-anchor</topology>
        <orientation evidence="9 12">Extracellular side</orientation>
    </subcellularLocation>
</comment>
<comment type="alternative products">
    <event type="alternative splicing"/>
    <isoform>
        <id>Q96CW9-1</id>
        <name>1</name>
        <sequence type="displayed"/>
    </isoform>
    <isoform>
        <id>Q96CW9-2</id>
        <name>2</name>
        <sequence type="described" ref="VSP_013147 VSP_013148"/>
    </isoform>
</comment>
<comment type="domain">
    <text>The laminin N-terminal domain mediates 1:1 binding to NGL ligand with sub-micromolar affinity. Three NGL-binding loops mediate discrimination for LRRC4C/NGL1 among other NGLs by binding specifically to its LRR repeats. This specificity drives the sorting of a mixed population of molecules into discrete cell surface subdomains.</text>
</comment>
<comment type="PTM">
    <text evidence="2">N-glycosylated.</text>
</comment>
<comment type="disease" evidence="11 12 13">
    <disease id="DI-05720">
        <name>Neurodevelopmental disorder with behavioral abnormalities, absent speech, and hypotonia</name>
        <acronym>NEDBASH</acronym>
        <description>An autosomal recessive disorder characterized by global developmental delay with severely impaired intellectual development, impaired motor development, axial and peripheral hypotonia, poor speech and significant behavioral abnormalities, including autism spectrum disorder, hyperactivity, mood disorders, aggression, hand and face stereotypies, sleep disturbances, anxiety, self-injurious behavior, and bruxism.</description>
        <dbReference type="MIM" id="618718"/>
    </disease>
    <text>The disease is caused by variants affecting the gene represented in this entry.</text>
</comment>
<comment type="sequence caution" evidence="15">
    <conflict type="erroneous initiation">
        <sequence resource="EMBL-CDS" id="BAB47486"/>
    </conflict>
    <text>Extended N-terminus.</text>
</comment>